<keyword id="KW-1003">Cell membrane</keyword>
<keyword id="KW-0285">Flavoprotein</keyword>
<keyword id="KW-0288">FMN</keyword>
<keyword id="KW-0472">Membrane</keyword>
<keyword id="KW-0560">Oxidoreductase</keyword>
<keyword id="KW-0665">Pyrimidine biosynthesis</keyword>
<keyword id="KW-1185">Reference proteome</keyword>
<organism>
    <name type="scientific">Chromobacterium violaceum (strain ATCC 12472 / DSM 30191 / JCM 1249 / CCUG 213 / NBRC 12614 / NCIMB 9131 / NCTC 9757 / MK)</name>
    <dbReference type="NCBI Taxonomy" id="243365"/>
    <lineage>
        <taxon>Bacteria</taxon>
        <taxon>Pseudomonadati</taxon>
        <taxon>Pseudomonadota</taxon>
        <taxon>Betaproteobacteria</taxon>
        <taxon>Neisseriales</taxon>
        <taxon>Chromobacteriaceae</taxon>
        <taxon>Chromobacterium</taxon>
    </lineage>
</organism>
<comment type="function">
    <text evidence="1">Catalyzes the conversion of dihydroorotate to orotate with quinone as electron acceptor.</text>
</comment>
<comment type="catalytic activity">
    <reaction evidence="1">
        <text>(S)-dihydroorotate + a quinone = orotate + a quinol</text>
        <dbReference type="Rhea" id="RHEA:30187"/>
        <dbReference type="ChEBI" id="CHEBI:24646"/>
        <dbReference type="ChEBI" id="CHEBI:30839"/>
        <dbReference type="ChEBI" id="CHEBI:30864"/>
        <dbReference type="ChEBI" id="CHEBI:132124"/>
        <dbReference type="EC" id="1.3.5.2"/>
    </reaction>
</comment>
<comment type="cofactor">
    <cofactor evidence="1">
        <name>FMN</name>
        <dbReference type="ChEBI" id="CHEBI:58210"/>
    </cofactor>
    <text evidence="1">Binds 1 FMN per subunit.</text>
</comment>
<comment type="pathway">
    <text evidence="1">Pyrimidine metabolism; UMP biosynthesis via de novo pathway; orotate from (S)-dihydroorotate (quinone route): step 1/1.</text>
</comment>
<comment type="subunit">
    <text evidence="1">Monomer.</text>
</comment>
<comment type="subcellular location">
    <subcellularLocation>
        <location evidence="1">Cell membrane</location>
        <topology evidence="1">Peripheral membrane protein</topology>
    </subcellularLocation>
</comment>
<comment type="similarity">
    <text evidence="1">Belongs to the dihydroorotate dehydrogenase family. Type 2 subfamily.</text>
</comment>
<dbReference type="EC" id="1.3.5.2" evidence="1"/>
<dbReference type="EMBL" id="AE016825">
    <property type="protein sequence ID" value="AAQ59486.1"/>
    <property type="molecule type" value="Genomic_DNA"/>
</dbReference>
<dbReference type="RefSeq" id="WP_011135364.1">
    <property type="nucleotide sequence ID" value="NC_005085.1"/>
</dbReference>
<dbReference type="SMR" id="Q7NX17"/>
<dbReference type="STRING" id="243365.CV_1812"/>
<dbReference type="KEGG" id="cvi:CV_1812"/>
<dbReference type="eggNOG" id="COG0167">
    <property type="taxonomic scope" value="Bacteria"/>
</dbReference>
<dbReference type="HOGENOM" id="CLU_013640_2_0_4"/>
<dbReference type="OrthoDB" id="9802377at2"/>
<dbReference type="UniPathway" id="UPA00070">
    <property type="reaction ID" value="UER00946"/>
</dbReference>
<dbReference type="Proteomes" id="UP000001424">
    <property type="component" value="Chromosome"/>
</dbReference>
<dbReference type="GO" id="GO:0005737">
    <property type="term" value="C:cytoplasm"/>
    <property type="evidence" value="ECO:0007669"/>
    <property type="project" value="InterPro"/>
</dbReference>
<dbReference type="GO" id="GO:0005886">
    <property type="term" value="C:plasma membrane"/>
    <property type="evidence" value="ECO:0007669"/>
    <property type="project" value="UniProtKB-SubCell"/>
</dbReference>
<dbReference type="GO" id="GO:0106430">
    <property type="term" value="F:dihydroorotate dehydrogenase (quinone) activity"/>
    <property type="evidence" value="ECO:0007669"/>
    <property type="project" value="UniProtKB-EC"/>
</dbReference>
<dbReference type="GO" id="GO:0006207">
    <property type="term" value="P:'de novo' pyrimidine nucleobase biosynthetic process"/>
    <property type="evidence" value="ECO:0007669"/>
    <property type="project" value="InterPro"/>
</dbReference>
<dbReference type="GO" id="GO:0044205">
    <property type="term" value="P:'de novo' UMP biosynthetic process"/>
    <property type="evidence" value="ECO:0007669"/>
    <property type="project" value="UniProtKB-UniRule"/>
</dbReference>
<dbReference type="CDD" id="cd04738">
    <property type="entry name" value="DHOD_2_like"/>
    <property type="match status" value="1"/>
</dbReference>
<dbReference type="FunFam" id="3.20.20.70:FF:000028">
    <property type="entry name" value="Dihydroorotate dehydrogenase (quinone)"/>
    <property type="match status" value="1"/>
</dbReference>
<dbReference type="Gene3D" id="3.20.20.70">
    <property type="entry name" value="Aldolase class I"/>
    <property type="match status" value="1"/>
</dbReference>
<dbReference type="HAMAP" id="MF_00225">
    <property type="entry name" value="DHO_dh_type2"/>
    <property type="match status" value="1"/>
</dbReference>
<dbReference type="InterPro" id="IPR013785">
    <property type="entry name" value="Aldolase_TIM"/>
</dbReference>
<dbReference type="InterPro" id="IPR050074">
    <property type="entry name" value="DHO_dehydrogenase"/>
</dbReference>
<dbReference type="InterPro" id="IPR012135">
    <property type="entry name" value="Dihydroorotate_DH_1_2"/>
</dbReference>
<dbReference type="InterPro" id="IPR005719">
    <property type="entry name" value="Dihydroorotate_DH_2"/>
</dbReference>
<dbReference type="InterPro" id="IPR005720">
    <property type="entry name" value="Dihydroorotate_DH_cat"/>
</dbReference>
<dbReference type="InterPro" id="IPR001295">
    <property type="entry name" value="Dihydroorotate_DH_CS"/>
</dbReference>
<dbReference type="NCBIfam" id="NF003644">
    <property type="entry name" value="PRK05286.1-1"/>
    <property type="match status" value="1"/>
</dbReference>
<dbReference type="NCBIfam" id="NF003645">
    <property type="entry name" value="PRK05286.1-2"/>
    <property type="match status" value="1"/>
</dbReference>
<dbReference type="NCBIfam" id="NF003646">
    <property type="entry name" value="PRK05286.1-4"/>
    <property type="match status" value="1"/>
</dbReference>
<dbReference type="NCBIfam" id="NF003652">
    <property type="entry name" value="PRK05286.2-5"/>
    <property type="match status" value="1"/>
</dbReference>
<dbReference type="NCBIfam" id="TIGR01036">
    <property type="entry name" value="pyrD_sub2"/>
    <property type="match status" value="1"/>
</dbReference>
<dbReference type="PANTHER" id="PTHR48109:SF4">
    <property type="entry name" value="DIHYDROOROTATE DEHYDROGENASE (QUINONE), MITOCHONDRIAL"/>
    <property type="match status" value="1"/>
</dbReference>
<dbReference type="PANTHER" id="PTHR48109">
    <property type="entry name" value="DIHYDROOROTATE DEHYDROGENASE (QUINONE), MITOCHONDRIAL-RELATED"/>
    <property type="match status" value="1"/>
</dbReference>
<dbReference type="Pfam" id="PF01180">
    <property type="entry name" value="DHO_dh"/>
    <property type="match status" value="1"/>
</dbReference>
<dbReference type="PIRSF" id="PIRSF000164">
    <property type="entry name" value="DHO_oxidase"/>
    <property type="match status" value="1"/>
</dbReference>
<dbReference type="SUPFAM" id="SSF51395">
    <property type="entry name" value="FMN-linked oxidoreductases"/>
    <property type="match status" value="1"/>
</dbReference>
<dbReference type="PROSITE" id="PS00911">
    <property type="entry name" value="DHODEHASE_1"/>
    <property type="match status" value="1"/>
</dbReference>
<dbReference type="PROSITE" id="PS00912">
    <property type="entry name" value="DHODEHASE_2"/>
    <property type="match status" value="1"/>
</dbReference>
<reference key="1">
    <citation type="journal article" date="2003" name="Proc. Natl. Acad. Sci. U.S.A.">
        <title>The complete genome sequence of Chromobacterium violaceum reveals remarkable and exploitable bacterial adaptability.</title>
        <authorList>
            <person name="Vasconcelos A.T.R."/>
            <person name="de Almeida D.F."/>
            <person name="Hungria M."/>
            <person name="Guimaraes C.T."/>
            <person name="Antonio R.V."/>
            <person name="Almeida F.C."/>
            <person name="de Almeida L.G.P."/>
            <person name="de Almeida R."/>
            <person name="Alves-Gomes J.A."/>
            <person name="Andrade E.M."/>
            <person name="Araripe J."/>
            <person name="de Araujo M.F.F."/>
            <person name="Astolfi-Filho S."/>
            <person name="Azevedo V."/>
            <person name="Baptista A.J."/>
            <person name="Bataus L.A.M."/>
            <person name="Batista J.S."/>
            <person name="Belo A."/>
            <person name="van den Berg C."/>
            <person name="Bogo M."/>
            <person name="Bonatto S."/>
            <person name="Bordignon J."/>
            <person name="Brigido M.M."/>
            <person name="Brito C.A."/>
            <person name="Brocchi M."/>
            <person name="Burity H.A."/>
            <person name="Camargo A.A."/>
            <person name="Cardoso D.D.P."/>
            <person name="Carneiro N.P."/>
            <person name="Carraro D.M."/>
            <person name="Carvalho C.M.B."/>
            <person name="Cascardo J.C.M."/>
            <person name="Cavada B.S."/>
            <person name="Chueire L.M.O."/>
            <person name="Creczynski-Pasa T.B."/>
            <person name="Cunha-Junior N.C."/>
            <person name="Fagundes N."/>
            <person name="Falcao C.L."/>
            <person name="Fantinatti F."/>
            <person name="Farias I.P."/>
            <person name="Felipe M.S.S."/>
            <person name="Ferrari L.P."/>
            <person name="Ferro J.A."/>
            <person name="Ferro M.I.T."/>
            <person name="Franco G.R."/>
            <person name="Freitas N.S.A."/>
            <person name="Furlan L.R."/>
            <person name="Gazzinelli R.T."/>
            <person name="Gomes E.A."/>
            <person name="Goncalves P.R."/>
            <person name="Grangeiro T.B."/>
            <person name="Grattapaglia D."/>
            <person name="Grisard E.C."/>
            <person name="Hanna E.S."/>
            <person name="Jardim S.N."/>
            <person name="Laurino J."/>
            <person name="Leoi L.C.T."/>
            <person name="Lima L.F.A."/>
            <person name="Loureiro M.F."/>
            <person name="Lyra M.C.C.P."/>
            <person name="Madeira H.M.F."/>
            <person name="Manfio G.P."/>
            <person name="Maranhao A.Q."/>
            <person name="Martins W.S."/>
            <person name="di Mauro S.M.Z."/>
            <person name="de Medeiros S.R.B."/>
            <person name="Meissner R.V."/>
            <person name="Moreira M.A.M."/>
            <person name="Nascimento F.F."/>
            <person name="Nicolas M.F."/>
            <person name="Oliveira J.G."/>
            <person name="Oliveira S.C."/>
            <person name="Paixao R.F.C."/>
            <person name="Parente J.A."/>
            <person name="Pedrosa F.O."/>
            <person name="Pena S.D.J."/>
            <person name="Pereira J.O."/>
            <person name="Pereira M."/>
            <person name="Pinto L.S.R.C."/>
            <person name="Pinto L.S."/>
            <person name="Porto J.I.R."/>
            <person name="Potrich D.P."/>
            <person name="Ramalho-Neto C.E."/>
            <person name="Reis A.M.M."/>
            <person name="Rigo L.U."/>
            <person name="Rondinelli E."/>
            <person name="Santos E.B.P."/>
            <person name="Santos F.R."/>
            <person name="Schneider M.P.C."/>
            <person name="Seuanez H.N."/>
            <person name="Silva A.M.R."/>
            <person name="da Silva A.L.C."/>
            <person name="Silva D.W."/>
            <person name="Silva R."/>
            <person name="Simoes I.C."/>
            <person name="Simon D."/>
            <person name="Soares C.M.A."/>
            <person name="Soares R.B.A."/>
            <person name="Souza E.M."/>
            <person name="Souza K.R.L."/>
            <person name="Souza R.C."/>
            <person name="Steffens M.B.R."/>
            <person name="Steindel M."/>
            <person name="Teixeira S.R."/>
            <person name="Urmenyi T."/>
            <person name="Vettore A."/>
            <person name="Wassem R."/>
            <person name="Zaha A."/>
            <person name="Simpson A.J.G."/>
        </authorList>
    </citation>
    <scope>NUCLEOTIDE SEQUENCE [LARGE SCALE GENOMIC DNA]</scope>
    <source>
        <strain>ATCC 12472 / DSM 30191 / JCM 1249 / CCUG 213 / NBRC 12614 / NCIMB 9131 / NCTC 9757 / MK</strain>
    </source>
</reference>
<evidence type="ECO:0000255" key="1">
    <source>
        <dbReference type="HAMAP-Rule" id="MF_00225"/>
    </source>
</evidence>
<feature type="chain" id="PRO_0000148430" description="Dihydroorotate dehydrogenase (quinone)">
    <location>
        <begin position="1"/>
        <end position="344"/>
    </location>
</feature>
<feature type="active site" description="Nucleophile" evidence="1">
    <location>
        <position position="175"/>
    </location>
</feature>
<feature type="binding site" evidence="1">
    <location>
        <begin position="62"/>
        <end position="66"/>
    </location>
    <ligand>
        <name>FMN</name>
        <dbReference type="ChEBI" id="CHEBI:58210"/>
    </ligand>
</feature>
<feature type="binding site" evidence="1">
    <location>
        <position position="66"/>
    </location>
    <ligand>
        <name>substrate</name>
    </ligand>
</feature>
<feature type="binding site" evidence="1">
    <location>
        <position position="86"/>
    </location>
    <ligand>
        <name>FMN</name>
        <dbReference type="ChEBI" id="CHEBI:58210"/>
    </ligand>
</feature>
<feature type="binding site" evidence="1">
    <location>
        <begin position="111"/>
        <end position="115"/>
    </location>
    <ligand>
        <name>substrate</name>
    </ligand>
</feature>
<feature type="binding site" evidence="1">
    <location>
        <position position="139"/>
    </location>
    <ligand>
        <name>FMN</name>
        <dbReference type="ChEBI" id="CHEBI:58210"/>
    </ligand>
</feature>
<feature type="binding site" evidence="1">
    <location>
        <position position="172"/>
    </location>
    <ligand>
        <name>FMN</name>
        <dbReference type="ChEBI" id="CHEBI:58210"/>
    </ligand>
</feature>
<feature type="binding site" evidence="1">
    <location>
        <position position="172"/>
    </location>
    <ligand>
        <name>substrate</name>
    </ligand>
</feature>
<feature type="binding site" evidence="1">
    <location>
        <position position="177"/>
    </location>
    <ligand>
        <name>substrate</name>
    </ligand>
</feature>
<feature type="binding site" evidence="1">
    <location>
        <position position="217"/>
    </location>
    <ligand>
        <name>FMN</name>
        <dbReference type="ChEBI" id="CHEBI:58210"/>
    </ligand>
</feature>
<feature type="binding site" evidence="1">
    <location>
        <position position="245"/>
    </location>
    <ligand>
        <name>FMN</name>
        <dbReference type="ChEBI" id="CHEBI:58210"/>
    </ligand>
</feature>
<feature type="binding site" evidence="1">
    <location>
        <begin position="246"/>
        <end position="247"/>
    </location>
    <ligand>
        <name>substrate</name>
    </ligand>
</feature>
<feature type="binding site" evidence="1">
    <location>
        <position position="268"/>
    </location>
    <ligand>
        <name>FMN</name>
        <dbReference type="ChEBI" id="CHEBI:58210"/>
    </ligand>
</feature>
<feature type="binding site" evidence="1">
    <location>
        <position position="297"/>
    </location>
    <ligand>
        <name>FMN</name>
        <dbReference type="ChEBI" id="CHEBI:58210"/>
    </ligand>
</feature>
<feature type="binding site" evidence="1">
    <location>
        <begin position="318"/>
        <end position="319"/>
    </location>
    <ligand>
        <name>FMN</name>
        <dbReference type="ChEBI" id="CHEBI:58210"/>
    </ligand>
</feature>
<gene>
    <name evidence="1" type="primary">pyrD</name>
    <name type="ordered locus">CV_1812</name>
</gene>
<name>PYRD_CHRVO</name>
<sequence>MLYPLLRPLLFKFDAETAHEHTLKMLDRAHRLHLTPLAASPAARQPVQAMGLTFPNPVGLAAGLDKNGAHIDALAALGFGFIEIGTVTPRPQDGNPKPRLFRLPEHEAIINRMGFNNHGVAALLDNVRRSKFKGVLGINIGKNAITPIENAVDDYLACLDQVYAAASYVTVNISSPNTKNLRQLQQGDELGRLLAALKQRQLALADQHGRYVPLAVKIAPDLDDEQIAEIARLLTGNGIDGVIATNTTLSRREVAGHPLESEAGGLSGAPVRARSTEVIRKLHKELGGAMPIIGVGGILSGNDAVEKLDAGASLVQLYSGLIYRGPELVGECARATAQYLQARN</sequence>
<proteinExistence type="inferred from homology"/>
<protein>
    <recommendedName>
        <fullName evidence="1">Dihydroorotate dehydrogenase (quinone)</fullName>
        <ecNumber evidence="1">1.3.5.2</ecNumber>
    </recommendedName>
    <alternativeName>
        <fullName evidence="1">DHOdehase</fullName>
        <shortName evidence="1">DHOD</shortName>
        <shortName evidence="1">DHODase</shortName>
    </alternativeName>
    <alternativeName>
        <fullName evidence="1">Dihydroorotate oxidase</fullName>
    </alternativeName>
</protein>
<accession>Q7NX17</accession>